<comment type="function">
    <text evidence="1">The glycine cleavage system catalyzes the degradation of glycine. The H protein shuttles the methylamine group of glycine from the P protein to the T protein.</text>
</comment>
<comment type="cofactor">
    <cofactor evidence="1">
        <name>(R)-lipoate</name>
        <dbReference type="ChEBI" id="CHEBI:83088"/>
    </cofactor>
    <text evidence="1">Binds 1 lipoyl cofactor covalently.</text>
</comment>
<comment type="subunit">
    <text evidence="1">The glycine cleavage system is composed of four proteins: P, T, L and H.</text>
</comment>
<comment type="similarity">
    <text evidence="1">Belongs to the GcvH family.</text>
</comment>
<dbReference type="EMBL" id="CP000386">
    <property type="protein sequence ID" value="ABG06088.1"/>
    <property type="molecule type" value="Genomic_DNA"/>
</dbReference>
<dbReference type="RefSeq" id="WP_011566093.1">
    <property type="nucleotide sequence ID" value="NC_008148.1"/>
</dbReference>
<dbReference type="SMR" id="Q1AR90"/>
<dbReference type="STRING" id="266117.Rxyl_3183"/>
<dbReference type="KEGG" id="rxy:Rxyl_3183"/>
<dbReference type="eggNOG" id="COG0509">
    <property type="taxonomic scope" value="Bacteria"/>
</dbReference>
<dbReference type="HOGENOM" id="CLU_097408_2_0_11"/>
<dbReference type="PhylomeDB" id="Q1AR90"/>
<dbReference type="Proteomes" id="UP000006637">
    <property type="component" value="Chromosome"/>
</dbReference>
<dbReference type="GO" id="GO:0005829">
    <property type="term" value="C:cytosol"/>
    <property type="evidence" value="ECO:0007669"/>
    <property type="project" value="TreeGrafter"/>
</dbReference>
<dbReference type="GO" id="GO:0005960">
    <property type="term" value="C:glycine cleavage complex"/>
    <property type="evidence" value="ECO:0007669"/>
    <property type="project" value="InterPro"/>
</dbReference>
<dbReference type="GO" id="GO:0019464">
    <property type="term" value="P:glycine decarboxylation via glycine cleavage system"/>
    <property type="evidence" value="ECO:0007669"/>
    <property type="project" value="UniProtKB-UniRule"/>
</dbReference>
<dbReference type="CDD" id="cd06848">
    <property type="entry name" value="GCS_H"/>
    <property type="match status" value="1"/>
</dbReference>
<dbReference type="Gene3D" id="2.40.50.100">
    <property type="match status" value="1"/>
</dbReference>
<dbReference type="HAMAP" id="MF_00272">
    <property type="entry name" value="GcvH"/>
    <property type="match status" value="1"/>
</dbReference>
<dbReference type="InterPro" id="IPR003016">
    <property type="entry name" value="2-oxoA_DH_lipoyl-BS"/>
</dbReference>
<dbReference type="InterPro" id="IPR000089">
    <property type="entry name" value="Biotin_lipoyl"/>
</dbReference>
<dbReference type="InterPro" id="IPR002930">
    <property type="entry name" value="GCV_H"/>
</dbReference>
<dbReference type="InterPro" id="IPR033753">
    <property type="entry name" value="GCV_H/Fam206"/>
</dbReference>
<dbReference type="InterPro" id="IPR017453">
    <property type="entry name" value="GCV_H_sub"/>
</dbReference>
<dbReference type="InterPro" id="IPR011053">
    <property type="entry name" value="Single_hybrid_motif"/>
</dbReference>
<dbReference type="NCBIfam" id="TIGR00527">
    <property type="entry name" value="gcvH"/>
    <property type="match status" value="1"/>
</dbReference>
<dbReference type="NCBIfam" id="NF002270">
    <property type="entry name" value="PRK01202.1"/>
    <property type="match status" value="1"/>
</dbReference>
<dbReference type="PANTHER" id="PTHR11715">
    <property type="entry name" value="GLYCINE CLEAVAGE SYSTEM H PROTEIN"/>
    <property type="match status" value="1"/>
</dbReference>
<dbReference type="PANTHER" id="PTHR11715:SF3">
    <property type="entry name" value="GLYCINE CLEAVAGE SYSTEM H PROTEIN-RELATED"/>
    <property type="match status" value="1"/>
</dbReference>
<dbReference type="Pfam" id="PF01597">
    <property type="entry name" value="GCV_H"/>
    <property type="match status" value="1"/>
</dbReference>
<dbReference type="SUPFAM" id="SSF51230">
    <property type="entry name" value="Single hybrid motif"/>
    <property type="match status" value="1"/>
</dbReference>
<dbReference type="PROSITE" id="PS50968">
    <property type="entry name" value="BIOTINYL_LIPOYL"/>
    <property type="match status" value="1"/>
</dbReference>
<dbReference type="PROSITE" id="PS00189">
    <property type="entry name" value="LIPOYL"/>
    <property type="match status" value="1"/>
</dbReference>
<organism>
    <name type="scientific">Rubrobacter xylanophilus (strain DSM 9941 / JCM 11954 / NBRC 16129 / PRD-1)</name>
    <dbReference type="NCBI Taxonomy" id="266117"/>
    <lineage>
        <taxon>Bacteria</taxon>
        <taxon>Bacillati</taxon>
        <taxon>Actinomycetota</taxon>
        <taxon>Rubrobacteria</taxon>
        <taxon>Rubrobacterales</taxon>
        <taxon>Rubrobacteraceae</taxon>
        <taxon>Rubrobacter</taxon>
    </lineage>
</organism>
<gene>
    <name evidence="1" type="primary">gcvH</name>
    <name type="ordered locus">Rxyl_3183</name>
</gene>
<protein>
    <recommendedName>
        <fullName evidence="1">Glycine cleavage system H protein</fullName>
    </recommendedName>
</protein>
<reference key="1">
    <citation type="submission" date="2006-06" db="EMBL/GenBank/DDBJ databases">
        <title>Complete sequence of Rubrobacter xylanophilus DSM 9941.</title>
        <authorList>
            <consortium name="US DOE Joint Genome Institute"/>
            <person name="Copeland A."/>
            <person name="Lucas S."/>
            <person name="Lapidus A."/>
            <person name="Barry K."/>
            <person name="Detter J.C."/>
            <person name="Glavina del Rio T."/>
            <person name="Hammon N."/>
            <person name="Israni S."/>
            <person name="Dalin E."/>
            <person name="Tice H."/>
            <person name="Pitluck S."/>
            <person name="Munk A.C."/>
            <person name="Brettin T."/>
            <person name="Bruce D."/>
            <person name="Han C."/>
            <person name="Tapia R."/>
            <person name="Gilna P."/>
            <person name="Schmutz J."/>
            <person name="Larimer F."/>
            <person name="Land M."/>
            <person name="Hauser L."/>
            <person name="Kyrpides N."/>
            <person name="Lykidis A."/>
            <person name="da Costa M.S."/>
            <person name="Rainey F.A."/>
            <person name="Empadinhas N."/>
            <person name="Jolivet E."/>
            <person name="Battista J.R."/>
            <person name="Richardson P."/>
        </authorList>
    </citation>
    <scope>NUCLEOTIDE SEQUENCE [LARGE SCALE GENOMIC DNA]</scope>
    <source>
        <strain>DSM 9941 / JCM 11954 / NBRC 16129 / PRD-1</strain>
    </source>
</reference>
<proteinExistence type="inferred from homology"/>
<name>GCSH_RUBXD</name>
<sequence>MAEIPQDLVYTRTHEWARIEGDAATVGITDHAQEELGDVVFVELPEVGSSVQAGEPFGTIESVKAVSDLYSPVSGEVTEVNTSLEESPEKVNEDPYGEGWLLRVRLSEEPDLLSPEEYARRLEEEE</sequence>
<accession>Q1AR90</accession>
<keyword id="KW-0450">Lipoyl</keyword>
<keyword id="KW-1185">Reference proteome</keyword>
<evidence type="ECO:0000255" key="1">
    <source>
        <dbReference type="HAMAP-Rule" id="MF_00272"/>
    </source>
</evidence>
<evidence type="ECO:0000255" key="2">
    <source>
        <dbReference type="PROSITE-ProRule" id="PRU01066"/>
    </source>
</evidence>
<feature type="chain" id="PRO_1000114542" description="Glycine cleavage system H protein">
    <location>
        <begin position="1"/>
        <end position="126"/>
    </location>
</feature>
<feature type="domain" description="Lipoyl-binding" evidence="2">
    <location>
        <begin position="23"/>
        <end position="105"/>
    </location>
</feature>
<feature type="modified residue" description="N6-lipoyllysine" evidence="1">
    <location>
        <position position="64"/>
    </location>
</feature>